<keyword id="KW-0067">ATP-binding</keyword>
<keyword id="KW-0997">Cell inner membrane</keyword>
<keyword id="KW-1003">Cell membrane</keyword>
<keyword id="KW-0472">Membrane</keyword>
<keyword id="KW-0547">Nucleotide-binding</keyword>
<keyword id="KW-1185">Reference proteome</keyword>
<keyword id="KW-0812">Transmembrane</keyword>
<keyword id="KW-1133">Transmembrane helix</keyword>
<keyword id="KW-0813">Transport</keyword>
<organism>
    <name type="scientific">Haemophilus influenzae (strain ATCC 51907 / DSM 11121 / KW20 / Rd)</name>
    <dbReference type="NCBI Taxonomy" id="71421"/>
    <lineage>
        <taxon>Bacteria</taxon>
        <taxon>Pseudomonadati</taxon>
        <taxon>Pseudomonadota</taxon>
        <taxon>Gammaproteobacteria</taxon>
        <taxon>Pasteurellales</taxon>
        <taxon>Pasteurellaceae</taxon>
        <taxon>Haemophilus</taxon>
    </lineage>
</organism>
<feature type="chain" id="PRO_0000093206" description="Uncharacterized ABC transporter ATP-binding protein HI_1467">
    <location>
        <begin position="1"/>
        <end position="589"/>
    </location>
</feature>
<feature type="transmembrane region" description="Helical" evidence="2">
    <location>
        <begin position="11"/>
        <end position="31"/>
    </location>
</feature>
<feature type="transmembrane region" description="Helical" evidence="2">
    <location>
        <begin position="57"/>
        <end position="77"/>
    </location>
</feature>
<feature type="transmembrane region" description="Helical" evidence="2">
    <location>
        <begin position="97"/>
        <end position="117"/>
    </location>
</feature>
<feature type="transmembrane region" description="Helical" evidence="2">
    <location>
        <begin position="190"/>
        <end position="210"/>
    </location>
</feature>
<feature type="transmembrane region" description="Helical" evidence="2">
    <location>
        <begin position="213"/>
        <end position="233"/>
    </location>
</feature>
<feature type="domain" description="ABC transmembrane type-1" evidence="2">
    <location>
        <begin position="57"/>
        <end position="357"/>
    </location>
</feature>
<feature type="domain" description="ABC transporter" evidence="1">
    <location>
        <begin position="390"/>
        <end position="587"/>
    </location>
</feature>
<feature type="binding site" evidence="1">
    <location>
        <begin position="423"/>
        <end position="430"/>
    </location>
    <ligand>
        <name>ATP</name>
        <dbReference type="ChEBI" id="CHEBI:30616"/>
    </ligand>
</feature>
<gene>
    <name type="ordered locus">HI_1467</name>
</gene>
<dbReference type="EMBL" id="L42023">
    <property type="protein sequence ID" value="AAC23116.1"/>
    <property type="molecule type" value="Genomic_DNA"/>
</dbReference>
<dbReference type="PIR" id="D64125">
    <property type="entry name" value="D64125"/>
</dbReference>
<dbReference type="RefSeq" id="NP_439618.1">
    <property type="nucleotide sequence ID" value="NC_000907.1"/>
</dbReference>
<dbReference type="SMR" id="P45221"/>
<dbReference type="STRING" id="71421.HI_1467"/>
<dbReference type="EnsemblBacteria" id="AAC23116">
    <property type="protein sequence ID" value="AAC23116"/>
    <property type="gene ID" value="HI_1467"/>
</dbReference>
<dbReference type="KEGG" id="hin:HI_1467"/>
<dbReference type="PATRIC" id="fig|71421.8.peg.1534"/>
<dbReference type="eggNOG" id="COG4178">
    <property type="taxonomic scope" value="Bacteria"/>
</dbReference>
<dbReference type="HOGENOM" id="CLU_007587_6_2_6"/>
<dbReference type="OrthoDB" id="9810134at2"/>
<dbReference type="PhylomeDB" id="P45221"/>
<dbReference type="BioCyc" id="HINF71421:G1GJ1-1493-MONOMER"/>
<dbReference type="Proteomes" id="UP000000579">
    <property type="component" value="Chromosome"/>
</dbReference>
<dbReference type="GO" id="GO:0005886">
    <property type="term" value="C:plasma membrane"/>
    <property type="evidence" value="ECO:0000318"/>
    <property type="project" value="GO_Central"/>
</dbReference>
<dbReference type="GO" id="GO:0140359">
    <property type="term" value="F:ABC-type transporter activity"/>
    <property type="evidence" value="ECO:0007669"/>
    <property type="project" value="InterPro"/>
</dbReference>
<dbReference type="GO" id="GO:0005524">
    <property type="term" value="F:ATP binding"/>
    <property type="evidence" value="ECO:0007669"/>
    <property type="project" value="UniProtKB-KW"/>
</dbReference>
<dbReference type="GO" id="GO:0016887">
    <property type="term" value="F:ATP hydrolysis activity"/>
    <property type="evidence" value="ECO:0007669"/>
    <property type="project" value="InterPro"/>
</dbReference>
<dbReference type="CDD" id="cd03223">
    <property type="entry name" value="ABCD_peroxisomal_ALDP"/>
    <property type="match status" value="1"/>
</dbReference>
<dbReference type="Gene3D" id="1.20.1560.10">
    <property type="entry name" value="ABC transporter type 1, transmembrane domain"/>
    <property type="match status" value="1"/>
</dbReference>
<dbReference type="Gene3D" id="3.40.50.300">
    <property type="entry name" value="P-loop containing nucleotide triphosphate hydrolases"/>
    <property type="match status" value="1"/>
</dbReference>
<dbReference type="InterPro" id="IPR003593">
    <property type="entry name" value="AAA+_ATPase"/>
</dbReference>
<dbReference type="InterPro" id="IPR011527">
    <property type="entry name" value="ABC1_TM_dom"/>
</dbReference>
<dbReference type="InterPro" id="IPR036640">
    <property type="entry name" value="ABC1_TM_sf"/>
</dbReference>
<dbReference type="InterPro" id="IPR003439">
    <property type="entry name" value="ABC_transporter-like_ATP-bd"/>
</dbReference>
<dbReference type="InterPro" id="IPR017871">
    <property type="entry name" value="ABC_transporter-like_CS"/>
</dbReference>
<dbReference type="InterPro" id="IPR050835">
    <property type="entry name" value="ABC_transporter_sub-D"/>
</dbReference>
<dbReference type="InterPro" id="IPR027417">
    <property type="entry name" value="P-loop_NTPase"/>
</dbReference>
<dbReference type="PANTHER" id="PTHR11384">
    <property type="entry name" value="ATP-BINDING CASSETTE, SUB-FAMILY D MEMBER"/>
    <property type="match status" value="1"/>
</dbReference>
<dbReference type="PANTHER" id="PTHR11384:SF59">
    <property type="entry name" value="LYSOSOMAL COBALAMIN TRANSPORTER ABCD4"/>
    <property type="match status" value="1"/>
</dbReference>
<dbReference type="Pfam" id="PF06472">
    <property type="entry name" value="ABC_membrane_2"/>
    <property type="match status" value="1"/>
</dbReference>
<dbReference type="Pfam" id="PF00005">
    <property type="entry name" value="ABC_tran"/>
    <property type="match status" value="1"/>
</dbReference>
<dbReference type="SMART" id="SM00382">
    <property type="entry name" value="AAA"/>
    <property type="match status" value="1"/>
</dbReference>
<dbReference type="SUPFAM" id="SSF90123">
    <property type="entry name" value="ABC transporter transmembrane region"/>
    <property type="match status" value="1"/>
</dbReference>
<dbReference type="SUPFAM" id="SSF52540">
    <property type="entry name" value="P-loop containing nucleoside triphosphate hydrolases"/>
    <property type="match status" value="1"/>
</dbReference>
<dbReference type="PROSITE" id="PS50929">
    <property type="entry name" value="ABC_TM1F"/>
    <property type="match status" value="1"/>
</dbReference>
<dbReference type="PROSITE" id="PS00211">
    <property type="entry name" value="ABC_TRANSPORTER_1"/>
    <property type="match status" value="1"/>
</dbReference>
<dbReference type="PROSITE" id="PS50893">
    <property type="entry name" value="ABC_TRANSPORTER_2"/>
    <property type="match status" value="1"/>
</dbReference>
<protein>
    <recommendedName>
        <fullName>Uncharacterized ABC transporter ATP-binding protein HI_1467</fullName>
    </recommendedName>
</protein>
<evidence type="ECO:0000255" key="1">
    <source>
        <dbReference type="PROSITE-ProRule" id="PRU00434"/>
    </source>
</evidence>
<evidence type="ECO:0000255" key="2">
    <source>
        <dbReference type="PROSITE-ProRule" id="PRU00441"/>
    </source>
</evidence>
<evidence type="ECO:0000305" key="3"/>
<sequence>MNWQTELNNSLNWILTALFWVVLCFSVTMLALKQTTFGKKFWCIVSPSMDKKTSIKLILMLLVLFIMILLEVRFSVLNSFFYNGLYSSMQELNIEKFWFFAKLNALLVVAQVIHAIADYFFQQVFEIRWLESFNATLVKRWLNKKKYYRLKYERDLPDNIDQRIEQDAREFITSTVQIVRGVINSVLTTIEFTIILWSLSGVLTLFGFNIEKGVVFFIYAFIIFATLMSVWIGRPLIKLNFTKEKLNGDYRYSLIRVRDNAESIAFYNGEPKEQTFLQHQFRQIIHNRWSIVLKMLGLNSFNSGVTRVAKLLPLMLQAPRFFSGQIKLGDMHQTVQAFNRLMTALSFFRLFYEQFTLYQARLNRLYGFITKMDELDKQNVHHPFHCSHRVALKNFGIKDEQGHVLLNNLNINLENGDALLIQGASGTGKTSLLKAIAGIYPFETIGIAEHPCMGSLFLPQRPYMPQGTLREAICYPNINPSHAELEQTMKDCALGKYIHALNVKNDWQAILSPGELQRVAFIRILLTKPDVVFLDETTSALDETTENLLYQTIKERLPEMIILSVGHRSTLQQFHNKQLKLDVCLLCEN</sequence>
<proteinExistence type="inferred from homology"/>
<reference key="1">
    <citation type="journal article" date="1995" name="Science">
        <title>Whole-genome random sequencing and assembly of Haemophilus influenzae Rd.</title>
        <authorList>
            <person name="Fleischmann R.D."/>
            <person name="Adams M.D."/>
            <person name="White O."/>
            <person name="Clayton R.A."/>
            <person name="Kirkness E.F."/>
            <person name="Kerlavage A.R."/>
            <person name="Bult C.J."/>
            <person name="Tomb J.-F."/>
            <person name="Dougherty B.A."/>
            <person name="Merrick J.M."/>
            <person name="McKenney K."/>
            <person name="Sutton G.G."/>
            <person name="FitzHugh W."/>
            <person name="Fields C.A."/>
            <person name="Gocayne J.D."/>
            <person name="Scott J.D."/>
            <person name="Shirley R."/>
            <person name="Liu L.-I."/>
            <person name="Glodek A."/>
            <person name="Kelley J.M."/>
            <person name="Weidman J.F."/>
            <person name="Phillips C.A."/>
            <person name="Spriggs T."/>
            <person name="Hedblom E."/>
            <person name="Cotton M.D."/>
            <person name="Utterback T.R."/>
            <person name="Hanna M.C."/>
            <person name="Nguyen D.T."/>
            <person name="Saudek D.M."/>
            <person name="Brandon R.C."/>
            <person name="Fine L.D."/>
            <person name="Fritchman J.L."/>
            <person name="Fuhrmann J.L."/>
            <person name="Geoghagen N.S.M."/>
            <person name="Gnehm C.L."/>
            <person name="McDonald L.A."/>
            <person name="Small K.V."/>
            <person name="Fraser C.M."/>
            <person name="Smith H.O."/>
            <person name="Venter J.C."/>
        </authorList>
    </citation>
    <scope>NUCLEOTIDE SEQUENCE [LARGE SCALE GENOMIC DNA]</scope>
    <source>
        <strain>ATCC 51907 / DSM 11121 / KW20 / Rd</strain>
    </source>
</reference>
<name>Y1467_HAEIN</name>
<comment type="subcellular location">
    <subcellularLocation>
        <location evidence="3">Cell inner membrane</location>
        <topology evidence="2">Multi-pass membrane protein</topology>
    </subcellularLocation>
</comment>
<comment type="similarity">
    <text evidence="3">Belongs to the ABC transporter superfamily.</text>
</comment>
<accession>P45221</accession>